<keyword id="KW-0963">Cytoplasm</keyword>
<keyword id="KW-1017">Isopeptide bond</keyword>
<keyword id="KW-0597">Phosphoprotein</keyword>
<keyword id="KW-1185">Reference proteome</keyword>
<keyword id="KW-0832">Ubl conjugation</keyword>
<feature type="chain" id="PRO_0000251894" description="ARL14 effector protein">
    <location>
        <begin position="1"/>
        <end position="276"/>
    </location>
</feature>
<feature type="region of interest" description="Disordered" evidence="3">
    <location>
        <begin position="159"/>
        <end position="183"/>
    </location>
</feature>
<feature type="modified residue" description="Phosphoserine" evidence="2">
    <location>
        <position position="182"/>
    </location>
</feature>
<feature type="modified residue" description="Phosphoserine" evidence="4">
    <location>
        <position position="266"/>
    </location>
</feature>
<feature type="cross-link" description="Glycyl lysine isopeptide (Lys-Gly) (interchain with G-Cter in SUMO2)" evidence="2">
    <location>
        <position position="176"/>
    </location>
</feature>
<sequence>MDPCSVGVQLRTTHDCHKTFYTRHTGFKTLKELSSNDMLLLQLRTGMTLSGNNTICLHHVKIYIERFEELQKSCCDPFNIHKKLAKKNLHVIDLDDATFLSAKFGRQLVPGWKLCPKCTQIINGSVDVDSDDRQRRKPESDGRTAKALRSLQFTNPGKQTEFAPESGKREKRKLTKNASASSDRQIIPAKSKVYDSQGLLIFSGMDLCDCLDEDCLGCFYACPTCGSTKCGAECRCDRKWLYEQIEIEGGEIIHNKHAGKAYGLLSPCHPYDILQK</sequence>
<gene>
    <name type="primary">Arl14ep</name>
    <name type="synonym">Arf7ep</name>
</gene>
<proteinExistence type="evidence at protein level"/>
<accession>Q5FVK8</accession>
<evidence type="ECO:0000250" key="1"/>
<evidence type="ECO:0000250" key="2">
    <source>
        <dbReference type="UniProtKB" id="Q8N8R7"/>
    </source>
</evidence>
<evidence type="ECO:0000256" key="3">
    <source>
        <dbReference type="SAM" id="MobiDB-lite"/>
    </source>
</evidence>
<evidence type="ECO:0007744" key="4">
    <source>
    </source>
</evidence>
<dbReference type="EMBL" id="BC089920">
    <property type="protein sequence ID" value="AAH89920.1"/>
    <property type="molecule type" value="mRNA"/>
</dbReference>
<dbReference type="RefSeq" id="NP_001014067.1">
    <property type="nucleotide sequence ID" value="NM_001014045.1"/>
</dbReference>
<dbReference type="RefSeq" id="XP_008760314.1">
    <property type="nucleotide sequence ID" value="XM_008762092.2"/>
</dbReference>
<dbReference type="RefSeq" id="XP_063139777.1">
    <property type="nucleotide sequence ID" value="XM_063283707.1"/>
</dbReference>
<dbReference type="SMR" id="Q5FVK8"/>
<dbReference type="FunCoup" id="Q5FVK8">
    <property type="interactions" value="2552"/>
</dbReference>
<dbReference type="STRING" id="10116.ENSRNOP00000006481"/>
<dbReference type="iPTMnet" id="Q5FVK8"/>
<dbReference type="PhosphoSitePlus" id="Q5FVK8"/>
<dbReference type="PaxDb" id="10116-ENSRNOP00000006481"/>
<dbReference type="Ensembl" id="ENSRNOT00000006481.5">
    <property type="protein sequence ID" value="ENSRNOP00000006481.4"/>
    <property type="gene ID" value="ENSRNOG00000004891.5"/>
</dbReference>
<dbReference type="GeneID" id="311279"/>
<dbReference type="KEGG" id="rno:311279"/>
<dbReference type="UCSC" id="RGD:1311463">
    <property type="organism name" value="rat"/>
</dbReference>
<dbReference type="AGR" id="RGD:1311463"/>
<dbReference type="CTD" id="120534"/>
<dbReference type="RGD" id="1311463">
    <property type="gene designation" value="Arl14ep"/>
</dbReference>
<dbReference type="eggNOG" id="KOG4850">
    <property type="taxonomic scope" value="Eukaryota"/>
</dbReference>
<dbReference type="GeneTree" id="ENSGT00940000156586"/>
<dbReference type="HOGENOM" id="CLU_093502_0_0_1"/>
<dbReference type="InParanoid" id="Q5FVK8"/>
<dbReference type="OMA" id="ECHKIYY"/>
<dbReference type="PhylomeDB" id="Q5FVK8"/>
<dbReference type="TreeFam" id="TF333216"/>
<dbReference type="PRO" id="PR:Q5FVK8"/>
<dbReference type="Proteomes" id="UP000002494">
    <property type="component" value="Chromosome 3"/>
</dbReference>
<dbReference type="Bgee" id="ENSRNOG00000004891">
    <property type="expression patterns" value="Expressed in cerebellum and 19 other cell types or tissues"/>
</dbReference>
<dbReference type="GO" id="GO:0005829">
    <property type="term" value="C:cytosol"/>
    <property type="evidence" value="ECO:0007669"/>
    <property type="project" value="Ensembl"/>
</dbReference>
<dbReference type="GO" id="GO:0005925">
    <property type="term" value="C:focal adhesion"/>
    <property type="evidence" value="ECO:0007669"/>
    <property type="project" value="Ensembl"/>
</dbReference>
<dbReference type="GO" id="GO:0043231">
    <property type="term" value="C:intracellular membrane-bounded organelle"/>
    <property type="evidence" value="ECO:0000318"/>
    <property type="project" value="GO_Central"/>
</dbReference>
<dbReference type="GO" id="GO:0005730">
    <property type="term" value="C:nucleolus"/>
    <property type="evidence" value="ECO:0007669"/>
    <property type="project" value="Ensembl"/>
</dbReference>
<dbReference type="GO" id="GO:0005654">
    <property type="term" value="C:nucleoplasm"/>
    <property type="evidence" value="ECO:0007669"/>
    <property type="project" value="Ensembl"/>
</dbReference>
<dbReference type="GO" id="GO:0005886">
    <property type="term" value="C:plasma membrane"/>
    <property type="evidence" value="ECO:0007669"/>
    <property type="project" value="Ensembl"/>
</dbReference>
<dbReference type="InterPro" id="IPR029264">
    <property type="entry name" value="ARF7EP_C"/>
</dbReference>
<dbReference type="PANTHER" id="PTHR46536">
    <property type="entry name" value="ARL14 EFFECTOR PROTEIN"/>
    <property type="match status" value="1"/>
</dbReference>
<dbReference type="PANTHER" id="PTHR46536:SF1">
    <property type="entry name" value="ARL14 EFFECTOR PROTEIN"/>
    <property type="match status" value="1"/>
</dbReference>
<dbReference type="Pfam" id="PF14949">
    <property type="entry name" value="ARF7EP_C"/>
    <property type="match status" value="1"/>
</dbReference>
<comment type="function">
    <text evidence="1">Through its interaction with ARL14 and MYO1E, may connect MHC class II-containing cytoplasmic vesicles to the actin network and hence controls the movement of these vesicles along the actin cytoskeleton in dendritic cells.</text>
</comment>
<comment type="subunit">
    <text evidence="1">Interacts with ARL14 and MYO1E.</text>
</comment>
<comment type="subcellular location">
    <subcellularLocation>
        <location evidence="1">Cytoplasm</location>
    </subcellularLocation>
</comment>
<organism>
    <name type="scientific">Rattus norvegicus</name>
    <name type="common">Rat</name>
    <dbReference type="NCBI Taxonomy" id="10116"/>
    <lineage>
        <taxon>Eukaryota</taxon>
        <taxon>Metazoa</taxon>
        <taxon>Chordata</taxon>
        <taxon>Craniata</taxon>
        <taxon>Vertebrata</taxon>
        <taxon>Euteleostomi</taxon>
        <taxon>Mammalia</taxon>
        <taxon>Eutheria</taxon>
        <taxon>Euarchontoglires</taxon>
        <taxon>Glires</taxon>
        <taxon>Rodentia</taxon>
        <taxon>Myomorpha</taxon>
        <taxon>Muroidea</taxon>
        <taxon>Muridae</taxon>
        <taxon>Murinae</taxon>
        <taxon>Rattus</taxon>
    </lineage>
</organism>
<protein>
    <recommendedName>
        <fullName>ARL14 effector protein</fullName>
    </recommendedName>
    <alternativeName>
        <fullName>ARF7 effector protein</fullName>
    </alternativeName>
</protein>
<reference key="1">
    <citation type="journal article" date="2004" name="Genome Res.">
        <title>The status, quality, and expansion of the NIH full-length cDNA project: the Mammalian Gene Collection (MGC).</title>
        <authorList>
            <consortium name="The MGC Project Team"/>
        </authorList>
    </citation>
    <scope>NUCLEOTIDE SEQUENCE [LARGE SCALE MRNA]</scope>
    <source>
        <tissue>Ovary</tissue>
    </source>
</reference>
<reference key="2">
    <citation type="journal article" date="2012" name="Nat. Commun.">
        <title>Quantitative maps of protein phosphorylation sites across 14 different rat organs and tissues.</title>
        <authorList>
            <person name="Lundby A."/>
            <person name="Secher A."/>
            <person name="Lage K."/>
            <person name="Nordsborg N.B."/>
            <person name="Dmytriyev A."/>
            <person name="Lundby C."/>
            <person name="Olsen J.V."/>
        </authorList>
    </citation>
    <scope>PHOSPHORYLATION [LARGE SCALE ANALYSIS] AT SER-266</scope>
    <scope>IDENTIFICATION BY MASS SPECTROMETRY [LARGE SCALE ANALYSIS]</scope>
</reference>
<name>AL14E_RAT</name>